<name>RBL_THEPO</name>
<feature type="chain" id="PRO_0000062605" description="Ribulose bisphosphate carboxylase large chain">
    <location>
        <begin position="1" status="less than"/>
        <end position="466"/>
    </location>
</feature>
<feature type="active site" description="Proton acceptor" evidence="1">
    <location>
        <position position="166"/>
    </location>
</feature>
<feature type="active site" description="Proton acceptor" evidence="1">
    <location>
        <position position="285"/>
    </location>
</feature>
<feature type="binding site" description="in homodimeric partner" evidence="1">
    <location>
        <position position="114"/>
    </location>
    <ligand>
        <name>substrate</name>
    </ligand>
</feature>
<feature type="binding site" evidence="1">
    <location>
        <position position="164"/>
    </location>
    <ligand>
        <name>substrate</name>
    </ligand>
</feature>
<feature type="binding site" evidence="1">
    <location>
        <position position="168"/>
    </location>
    <ligand>
        <name>substrate</name>
    </ligand>
</feature>
<feature type="binding site" description="via carbamate group" evidence="1">
    <location>
        <position position="192"/>
    </location>
    <ligand>
        <name>Mg(2+)</name>
        <dbReference type="ChEBI" id="CHEBI:18420"/>
    </ligand>
</feature>
<feature type="binding site" evidence="1">
    <location>
        <position position="194"/>
    </location>
    <ligand>
        <name>Mg(2+)</name>
        <dbReference type="ChEBI" id="CHEBI:18420"/>
    </ligand>
</feature>
<feature type="binding site" evidence="1">
    <location>
        <position position="195"/>
    </location>
    <ligand>
        <name>Mg(2+)</name>
        <dbReference type="ChEBI" id="CHEBI:18420"/>
    </ligand>
</feature>
<feature type="binding site" evidence="1">
    <location>
        <position position="286"/>
    </location>
    <ligand>
        <name>substrate</name>
    </ligand>
</feature>
<feature type="binding site" evidence="1">
    <location>
        <position position="318"/>
    </location>
    <ligand>
        <name>substrate</name>
    </ligand>
</feature>
<feature type="binding site" evidence="1">
    <location>
        <position position="370"/>
    </location>
    <ligand>
        <name>substrate</name>
    </ligand>
</feature>
<feature type="site" description="Transition state stabilizer" evidence="1">
    <location>
        <position position="325"/>
    </location>
</feature>
<feature type="modified residue" description="N6,N6,N6-trimethyllysine" evidence="1">
    <location>
        <position position="5"/>
    </location>
</feature>
<feature type="modified residue" description="N6-carboxylysine" evidence="1">
    <location>
        <position position="192"/>
    </location>
</feature>
<feature type="disulfide bond" description="Interchain; in linked form" evidence="1">
    <location>
        <position position="238"/>
    </location>
</feature>
<feature type="non-terminal residue">
    <location>
        <position position="1"/>
    </location>
</feature>
<organism>
    <name type="scientific">Thespesia populnea</name>
    <name type="common">Portia tree</name>
    <name type="synonym">Hibiscus populneus</name>
    <dbReference type="NCBI Taxonomy" id="3638"/>
    <lineage>
        <taxon>Eukaryota</taxon>
        <taxon>Viridiplantae</taxon>
        <taxon>Streptophyta</taxon>
        <taxon>Embryophyta</taxon>
        <taxon>Tracheophyta</taxon>
        <taxon>Spermatophyta</taxon>
        <taxon>Magnoliopsida</taxon>
        <taxon>eudicotyledons</taxon>
        <taxon>Gunneridae</taxon>
        <taxon>Pentapetalae</taxon>
        <taxon>rosids</taxon>
        <taxon>malvids</taxon>
        <taxon>Malvales</taxon>
        <taxon>Malvaceae</taxon>
        <taxon>Malvoideae</taxon>
        <taxon>Thespesia</taxon>
    </lineage>
</organism>
<evidence type="ECO:0000255" key="1">
    <source>
        <dbReference type="HAMAP-Rule" id="MF_01338"/>
    </source>
</evidence>
<keyword id="KW-0113">Calvin cycle</keyword>
<keyword id="KW-0120">Carbon dioxide fixation</keyword>
<keyword id="KW-0150">Chloroplast</keyword>
<keyword id="KW-1015">Disulfide bond</keyword>
<keyword id="KW-0456">Lyase</keyword>
<keyword id="KW-0460">Magnesium</keyword>
<keyword id="KW-0479">Metal-binding</keyword>
<keyword id="KW-0488">Methylation</keyword>
<keyword id="KW-0503">Monooxygenase</keyword>
<keyword id="KW-0560">Oxidoreductase</keyword>
<keyword id="KW-0601">Photorespiration</keyword>
<keyword id="KW-0602">Photosynthesis</keyword>
<keyword id="KW-0934">Plastid</keyword>
<accession>P28457</accession>
<proteinExistence type="inferred from homology"/>
<protein>
    <recommendedName>
        <fullName evidence="1">Ribulose bisphosphate carboxylase large chain</fullName>
        <shortName evidence="1">RuBisCO large subunit</shortName>
        <ecNumber evidence="1">4.1.1.39</ecNumber>
    </recommendedName>
</protein>
<reference key="1">
    <citation type="journal article" date="1992" name="Science">
        <title>Carnivorous plants: phylogeny and structural evolution.</title>
        <authorList>
            <person name="Albert V.A."/>
            <person name="Williams S.E."/>
            <person name="Chase M.W."/>
        </authorList>
    </citation>
    <scope>NUCLEOTIDE SEQUENCE [GENOMIC DNA]</scope>
</reference>
<gene>
    <name evidence="1" type="primary">rbcL</name>
</gene>
<geneLocation type="chloroplast"/>
<comment type="function">
    <text evidence="1">RuBisCO catalyzes two reactions: the carboxylation of D-ribulose 1,5-bisphosphate, the primary event in carbon dioxide fixation, as well as the oxidative fragmentation of the pentose substrate in the photorespiration process. Both reactions occur simultaneously and in competition at the same active site.</text>
</comment>
<comment type="catalytic activity">
    <reaction evidence="1">
        <text>2 (2R)-3-phosphoglycerate + 2 H(+) = D-ribulose 1,5-bisphosphate + CO2 + H2O</text>
        <dbReference type="Rhea" id="RHEA:23124"/>
        <dbReference type="ChEBI" id="CHEBI:15377"/>
        <dbReference type="ChEBI" id="CHEBI:15378"/>
        <dbReference type="ChEBI" id="CHEBI:16526"/>
        <dbReference type="ChEBI" id="CHEBI:57870"/>
        <dbReference type="ChEBI" id="CHEBI:58272"/>
        <dbReference type="EC" id="4.1.1.39"/>
    </reaction>
</comment>
<comment type="catalytic activity">
    <reaction evidence="1">
        <text>D-ribulose 1,5-bisphosphate + O2 = 2-phosphoglycolate + (2R)-3-phosphoglycerate + 2 H(+)</text>
        <dbReference type="Rhea" id="RHEA:36631"/>
        <dbReference type="ChEBI" id="CHEBI:15378"/>
        <dbReference type="ChEBI" id="CHEBI:15379"/>
        <dbReference type="ChEBI" id="CHEBI:57870"/>
        <dbReference type="ChEBI" id="CHEBI:58033"/>
        <dbReference type="ChEBI" id="CHEBI:58272"/>
    </reaction>
</comment>
<comment type="cofactor">
    <cofactor evidence="1">
        <name>Mg(2+)</name>
        <dbReference type="ChEBI" id="CHEBI:18420"/>
    </cofactor>
    <text evidence="1">Binds 1 Mg(2+) ion per subunit.</text>
</comment>
<comment type="subunit">
    <text evidence="1">Heterohexadecamer of 8 large chains and 8 small chains; disulfide-linked. The disulfide link is formed within the large subunit homodimers.</text>
</comment>
<comment type="subcellular location">
    <subcellularLocation>
        <location>Plastid</location>
        <location>Chloroplast</location>
    </subcellularLocation>
</comment>
<comment type="PTM">
    <text evidence="1">The disulfide bond which can form in the large chain dimeric partners within the hexadecamer appears to be associated with oxidative stress and protein turnover.</text>
</comment>
<comment type="miscellaneous">
    <text evidence="1">The basic functional RuBisCO is composed of a large chain homodimer in a 'head-to-tail' conformation. In form I RuBisCO this homodimer is arranged in a barrel-like tetramer with the small subunits forming a tetrameric 'cap' on each end of the 'barrel'.</text>
</comment>
<comment type="similarity">
    <text evidence="1">Belongs to the RuBisCO large chain family. Type I subfamily.</text>
</comment>
<dbReference type="EC" id="4.1.1.39" evidence="1"/>
<dbReference type="EMBL" id="L01961">
    <property type="protein sequence ID" value="AAA84665.2"/>
    <property type="molecule type" value="Genomic_DNA"/>
</dbReference>
<dbReference type="SMR" id="P28457"/>
<dbReference type="GO" id="GO:0009507">
    <property type="term" value="C:chloroplast"/>
    <property type="evidence" value="ECO:0007669"/>
    <property type="project" value="UniProtKB-SubCell"/>
</dbReference>
<dbReference type="GO" id="GO:0000287">
    <property type="term" value="F:magnesium ion binding"/>
    <property type="evidence" value="ECO:0007669"/>
    <property type="project" value="InterPro"/>
</dbReference>
<dbReference type="GO" id="GO:0004497">
    <property type="term" value="F:monooxygenase activity"/>
    <property type="evidence" value="ECO:0007669"/>
    <property type="project" value="UniProtKB-KW"/>
</dbReference>
<dbReference type="GO" id="GO:0016984">
    <property type="term" value="F:ribulose-bisphosphate carboxylase activity"/>
    <property type="evidence" value="ECO:0007669"/>
    <property type="project" value="UniProtKB-EC"/>
</dbReference>
<dbReference type="GO" id="GO:0009853">
    <property type="term" value="P:photorespiration"/>
    <property type="evidence" value="ECO:0007669"/>
    <property type="project" value="UniProtKB-KW"/>
</dbReference>
<dbReference type="GO" id="GO:0019253">
    <property type="term" value="P:reductive pentose-phosphate cycle"/>
    <property type="evidence" value="ECO:0007669"/>
    <property type="project" value="UniProtKB-KW"/>
</dbReference>
<dbReference type="CDD" id="cd08212">
    <property type="entry name" value="RuBisCO_large_I"/>
    <property type="match status" value="1"/>
</dbReference>
<dbReference type="FunFam" id="3.20.20.110:FF:000001">
    <property type="entry name" value="Ribulose bisphosphate carboxylase large chain"/>
    <property type="match status" value="1"/>
</dbReference>
<dbReference type="FunFam" id="3.30.70.150:FF:000001">
    <property type="entry name" value="Ribulose bisphosphate carboxylase large chain"/>
    <property type="match status" value="1"/>
</dbReference>
<dbReference type="Gene3D" id="3.20.20.110">
    <property type="entry name" value="Ribulose bisphosphate carboxylase, large subunit, C-terminal domain"/>
    <property type="match status" value="1"/>
</dbReference>
<dbReference type="Gene3D" id="3.30.70.150">
    <property type="entry name" value="RuBisCO large subunit, N-terminal domain"/>
    <property type="match status" value="1"/>
</dbReference>
<dbReference type="HAMAP" id="MF_01338">
    <property type="entry name" value="RuBisCO_L_type1"/>
    <property type="match status" value="1"/>
</dbReference>
<dbReference type="InterPro" id="IPR033966">
    <property type="entry name" value="RuBisCO"/>
</dbReference>
<dbReference type="InterPro" id="IPR020878">
    <property type="entry name" value="RuBisCo_large_chain_AS"/>
</dbReference>
<dbReference type="InterPro" id="IPR000685">
    <property type="entry name" value="RuBisCO_lsu_C"/>
</dbReference>
<dbReference type="InterPro" id="IPR036376">
    <property type="entry name" value="RuBisCO_lsu_C_sf"/>
</dbReference>
<dbReference type="InterPro" id="IPR017443">
    <property type="entry name" value="RuBisCO_lsu_fd_N"/>
</dbReference>
<dbReference type="InterPro" id="IPR036422">
    <property type="entry name" value="RuBisCO_lsu_N_sf"/>
</dbReference>
<dbReference type="InterPro" id="IPR020888">
    <property type="entry name" value="RuBisCO_lsuI"/>
</dbReference>
<dbReference type="NCBIfam" id="NF003252">
    <property type="entry name" value="PRK04208.1"/>
    <property type="match status" value="1"/>
</dbReference>
<dbReference type="PANTHER" id="PTHR42704">
    <property type="entry name" value="RIBULOSE BISPHOSPHATE CARBOXYLASE"/>
    <property type="match status" value="1"/>
</dbReference>
<dbReference type="PANTHER" id="PTHR42704:SF16">
    <property type="entry name" value="RIBULOSE BISPHOSPHATE CARBOXYLASE LARGE CHAIN"/>
    <property type="match status" value="1"/>
</dbReference>
<dbReference type="Pfam" id="PF00016">
    <property type="entry name" value="RuBisCO_large"/>
    <property type="match status" value="1"/>
</dbReference>
<dbReference type="Pfam" id="PF02788">
    <property type="entry name" value="RuBisCO_large_N"/>
    <property type="match status" value="1"/>
</dbReference>
<dbReference type="SFLD" id="SFLDG01052">
    <property type="entry name" value="RuBisCO"/>
    <property type="match status" value="1"/>
</dbReference>
<dbReference type="SFLD" id="SFLDS00014">
    <property type="entry name" value="RuBisCO"/>
    <property type="match status" value="1"/>
</dbReference>
<dbReference type="SFLD" id="SFLDG00301">
    <property type="entry name" value="RuBisCO-like_proteins"/>
    <property type="match status" value="1"/>
</dbReference>
<dbReference type="SUPFAM" id="SSF51649">
    <property type="entry name" value="RuBisCo, C-terminal domain"/>
    <property type="match status" value="1"/>
</dbReference>
<dbReference type="SUPFAM" id="SSF54966">
    <property type="entry name" value="RuBisCO, large subunit, small (N-terminal) domain"/>
    <property type="match status" value="1"/>
</dbReference>
<dbReference type="PROSITE" id="PS00157">
    <property type="entry name" value="RUBISCO_LARGE"/>
    <property type="match status" value="1"/>
</dbReference>
<sequence length="466" mass="51731">SVGFKAGVKEYKLTYYTPEYEVKDTDILAAFRVTPQPGVPPEEAGAAVAAESSTGTWTTVWTDGLTSLDRYKGRCYHIEPVLGEEDQYICYVAYPLDLFEEGSVTNMFTSIVGNVFGFKALRALRLEDLRIPIAYVKTFEGPPHGIQVERDKLNKYGRPLLGCTIKPKLGLSAKNYGRAVYECLRGGLDFTKDDENVNSQPFMRWRDRFLFCAEAIYKAQAETGEIKGHYLNATAGTCEEMMKRAVCARELGVPIVMHDYLTGGFTANTSLAHYCRDNGLLLHIHRAMHAVIDRQKNHGMHFRVLAKALRMSGGDHIHAGTVVGKLEGERDITLGFVDLLRDDFIEKDRSRGIYFTQDWVSMPGVLPVASGGIHVWHMPALTEIFGDDSVLQFGGGTLGHPWGNAPGAVANRVALEACVQARNEGRDLAREGNEIIREASKWSPELAAACEVWKAIKFEFDAVDNL</sequence>